<accession>Q9BMK3</accession>
<accession>Q9BMK2</accession>
<sequence length="133" mass="15409">MEPFIGTWKMEKSEGFDKIMERLGVDYFTRKMGNMMKPNLIISDLGDGRYNMRSESKFKTSEFSFKLGEQFKEVTPDSREVMSMLTVEDGVLKQEQVGKDKTTYIDRVVYGNELRATVKADELVCVRTYSRGM</sequence>
<name>FABP2_ECHGR</name>
<proteinExistence type="evidence at transcript level"/>
<protein>
    <recommendedName>
        <fullName>Fatty acid-binding protein homolog 2</fullName>
    </recommendedName>
</protein>
<comment type="function">
    <text evidence="3">May play a role in the acquisition, storage, and transport of lipids, and may be important to the organism since it is incapable of synthesizing most of its lipids de novo.</text>
</comment>
<comment type="domain">
    <text evidence="1">Forms a beta-barrel structure that accommodates hydrophobic ligands in its interior.</text>
</comment>
<comment type="similarity">
    <text evidence="3">Belongs to the calycin superfamily. Fatty-acid binding protein (FABP) family.</text>
</comment>
<evidence type="ECO:0000250" key="1"/>
<evidence type="ECO:0000250" key="2">
    <source>
        <dbReference type="UniProtKB" id="Q02970"/>
    </source>
</evidence>
<evidence type="ECO:0000305" key="3"/>
<feature type="chain" id="PRO_0000067352" description="Fatty acid-binding protein homolog 2">
    <location>
        <begin position="1"/>
        <end position="133"/>
    </location>
</feature>
<feature type="binding site" evidence="2">
    <location>
        <position position="107"/>
    </location>
    <ligand>
        <name>a fatty acid</name>
        <dbReference type="ChEBI" id="CHEBI:28868"/>
    </ligand>
</feature>
<feature type="binding site" evidence="2">
    <location>
        <begin position="127"/>
        <end position="129"/>
    </location>
    <ligand>
        <name>a fatty acid</name>
        <dbReference type="ChEBI" id="CHEBI:28868"/>
    </ligand>
</feature>
<feature type="sequence conflict" description="In Ref. 1; AAK12095." evidence="3" ref="1">
    <original>Y</original>
    <variation>D</variation>
    <location>
        <position position="110"/>
    </location>
</feature>
<reference key="1">
    <citation type="thesis" date="1996" institute="PEDECIBA" country="Uruguay">
        <title>Searching and characterization of Echinococcus granulosus genes involved in development.</title>
        <authorList>
            <person name="Esteves A."/>
        </authorList>
    </citation>
    <scope>NUCLEOTIDE SEQUENCE [GENOMIC DNA / MRNA]</scope>
</reference>
<keyword id="KW-0446">Lipid-binding</keyword>
<keyword id="KW-0813">Transport</keyword>
<organism>
    <name type="scientific">Echinococcus granulosus</name>
    <name type="common">Hydatid tapeworm</name>
    <dbReference type="NCBI Taxonomy" id="6210"/>
    <lineage>
        <taxon>Eukaryota</taxon>
        <taxon>Metazoa</taxon>
        <taxon>Spiralia</taxon>
        <taxon>Lophotrochozoa</taxon>
        <taxon>Platyhelminthes</taxon>
        <taxon>Cestoda</taxon>
        <taxon>Eucestoda</taxon>
        <taxon>Cyclophyllidea</taxon>
        <taxon>Taeniidae</taxon>
        <taxon>Echinococcus</taxon>
        <taxon>Echinococcus granulosus group</taxon>
    </lineage>
</organism>
<gene>
    <name type="primary">FABP2</name>
</gene>
<dbReference type="EMBL" id="AF321117">
    <property type="protein sequence ID" value="AAK12094.1"/>
    <property type="molecule type" value="Genomic_DNA"/>
</dbReference>
<dbReference type="EMBL" id="AF321118">
    <property type="protein sequence ID" value="AAK12095.1"/>
    <property type="molecule type" value="mRNA"/>
</dbReference>
<dbReference type="SMR" id="Q9BMK3"/>
<dbReference type="OrthoDB" id="412780at2759"/>
<dbReference type="Proteomes" id="UP000492820">
    <property type="component" value="Unplaced"/>
</dbReference>
<dbReference type="GO" id="GO:0008289">
    <property type="term" value="F:lipid binding"/>
    <property type="evidence" value="ECO:0007669"/>
    <property type="project" value="UniProtKB-KW"/>
</dbReference>
<dbReference type="CDD" id="cd00742">
    <property type="entry name" value="FABP"/>
    <property type="match status" value="1"/>
</dbReference>
<dbReference type="FunFam" id="2.40.128.20:FF:000001">
    <property type="entry name" value="Fatty acid-binding protein, adipocyte"/>
    <property type="match status" value="1"/>
</dbReference>
<dbReference type="Gene3D" id="2.40.128.20">
    <property type="match status" value="1"/>
</dbReference>
<dbReference type="InterPro" id="IPR012674">
    <property type="entry name" value="Calycin"/>
</dbReference>
<dbReference type="InterPro" id="IPR000463">
    <property type="entry name" value="Fatty_acid-bd"/>
</dbReference>
<dbReference type="InterPro" id="IPR031259">
    <property type="entry name" value="ILBP"/>
</dbReference>
<dbReference type="InterPro" id="IPR000566">
    <property type="entry name" value="Lipocln_cytosolic_FA-bd_dom"/>
</dbReference>
<dbReference type="PANTHER" id="PTHR11955">
    <property type="entry name" value="FATTY ACID BINDING PROTEIN"/>
    <property type="match status" value="1"/>
</dbReference>
<dbReference type="Pfam" id="PF00061">
    <property type="entry name" value="Lipocalin"/>
    <property type="match status" value="1"/>
</dbReference>
<dbReference type="PRINTS" id="PR00178">
    <property type="entry name" value="FATTYACIDBP"/>
</dbReference>
<dbReference type="SUPFAM" id="SSF50814">
    <property type="entry name" value="Lipocalins"/>
    <property type="match status" value="1"/>
</dbReference>
<dbReference type="PROSITE" id="PS00214">
    <property type="entry name" value="FABP"/>
    <property type="match status" value="1"/>
</dbReference>